<reference key="1">
    <citation type="journal article" date="2008" name="Genome Res.">
        <title>Chlamydia trachomatis: genome sequence analysis of lymphogranuloma venereum isolates.</title>
        <authorList>
            <person name="Thomson N.R."/>
            <person name="Holden M.T.G."/>
            <person name="Carder C."/>
            <person name="Lennard N."/>
            <person name="Lockey S.J."/>
            <person name="Marsh P."/>
            <person name="Skipp P."/>
            <person name="O'Connor C.D."/>
            <person name="Goodhead I."/>
            <person name="Norbertzcak H."/>
            <person name="Harris B."/>
            <person name="Ormond D."/>
            <person name="Rance R."/>
            <person name="Quail M.A."/>
            <person name="Parkhill J."/>
            <person name="Stephens R.S."/>
            <person name="Clarke I.N."/>
        </authorList>
    </citation>
    <scope>NUCLEOTIDE SEQUENCE [LARGE SCALE GENOMIC DNA]</scope>
    <source>
        <strain>ATCC VR-902B / DSM 19102 / 434/Bu</strain>
    </source>
</reference>
<keyword id="KW-0255">Endonuclease</keyword>
<keyword id="KW-0378">Hydrolase</keyword>
<keyword id="KW-0479">Metal-binding</keyword>
<keyword id="KW-0540">Nuclease</keyword>
<keyword id="KW-0819">tRNA processing</keyword>
<keyword id="KW-0862">Zinc</keyword>
<name>RNZ_CHLT2</name>
<comment type="function">
    <text evidence="1">Zinc phosphodiesterase, which displays some tRNA 3'-processing endonuclease activity. Probably involved in tRNA maturation, by removing a 3'-trailer from precursor tRNA.</text>
</comment>
<comment type="catalytic activity">
    <reaction evidence="1">
        <text>Endonucleolytic cleavage of RNA, removing extra 3' nucleotides from tRNA precursor, generating 3' termini of tRNAs. A 3'-hydroxy group is left at the tRNA terminus and a 5'-phosphoryl group is left at the trailer molecule.</text>
        <dbReference type="EC" id="3.1.26.11"/>
    </reaction>
</comment>
<comment type="cofactor">
    <cofactor evidence="1">
        <name>Zn(2+)</name>
        <dbReference type="ChEBI" id="CHEBI:29105"/>
    </cofactor>
    <text evidence="1">Binds 2 Zn(2+) ions.</text>
</comment>
<comment type="subunit">
    <text evidence="1">Homodimer.</text>
</comment>
<comment type="similarity">
    <text evidence="1">Belongs to the RNase Z family.</text>
</comment>
<organism>
    <name type="scientific">Chlamydia trachomatis serovar L2 (strain ATCC VR-902B / DSM 19102 / 434/Bu)</name>
    <dbReference type="NCBI Taxonomy" id="471472"/>
    <lineage>
        <taxon>Bacteria</taxon>
        <taxon>Pseudomonadati</taxon>
        <taxon>Chlamydiota</taxon>
        <taxon>Chlamydiia</taxon>
        <taxon>Chlamydiales</taxon>
        <taxon>Chlamydiaceae</taxon>
        <taxon>Chlamydia/Chlamydophila group</taxon>
        <taxon>Chlamydia</taxon>
    </lineage>
</organism>
<gene>
    <name evidence="1" type="primary">rnz</name>
    <name type="ordered locus">CTL0600</name>
</gene>
<dbReference type="EC" id="3.1.26.11" evidence="1"/>
<dbReference type="EMBL" id="AM884176">
    <property type="protein sequence ID" value="CAP04041.1"/>
    <property type="molecule type" value="Genomic_DNA"/>
</dbReference>
<dbReference type="RefSeq" id="WP_009873744.1">
    <property type="nucleotide sequence ID" value="NC_010287.1"/>
</dbReference>
<dbReference type="RefSeq" id="YP_001654676.1">
    <property type="nucleotide sequence ID" value="NC_010287.1"/>
</dbReference>
<dbReference type="SMR" id="B0B7R5"/>
<dbReference type="KEGG" id="ctb:CTL0600"/>
<dbReference type="PATRIC" id="fig|471472.4.peg.648"/>
<dbReference type="HOGENOM" id="CLU_031317_2_1_0"/>
<dbReference type="Proteomes" id="UP001154402">
    <property type="component" value="Chromosome"/>
</dbReference>
<dbReference type="GO" id="GO:0042781">
    <property type="term" value="F:3'-tRNA processing endoribonuclease activity"/>
    <property type="evidence" value="ECO:0007669"/>
    <property type="project" value="UniProtKB-UniRule"/>
</dbReference>
<dbReference type="GO" id="GO:0008270">
    <property type="term" value="F:zinc ion binding"/>
    <property type="evidence" value="ECO:0007669"/>
    <property type="project" value="UniProtKB-UniRule"/>
</dbReference>
<dbReference type="CDD" id="cd07717">
    <property type="entry name" value="RNaseZ_ZiPD-like_MBL-fold"/>
    <property type="match status" value="1"/>
</dbReference>
<dbReference type="CDD" id="cd00165">
    <property type="entry name" value="S4"/>
    <property type="match status" value="1"/>
</dbReference>
<dbReference type="FunFam" id="3.60.15.10:FF:000098">
    <property type="entry name" value="Ribonuclease Z"/>
    <property type="match status" value="1"/>
</dbReference>
<dbReference type="Gene3D" id="3.60.15.10">
    <property type="entry name" value="Ribonuclease Z/Hydroxyacylglutathione hydrolase-like"/>
    <property type="match status" value="1"/>
</dbReference>
<dbReference type="HAMAP" id="MF_01818">
    <property type="entry name" value="RNase_Z_BN"/>
    <property type="match status" value="1"/>
</dbReference>
<dbReference type="InterPro" id="IPR001279">
    <property type="entry name" value="Metallo-B-lactamas"/>
</dbReference>
<dbReference type="InterPro" id="IPR036866">
    <property type="entry name" value="RibonucZ/Hydroxyglut_hydro"/>
</dbReference>
<dbReference type="InterPro" id="IPR013471">
    <property type="entry name" value="RNase_Z/BN"/>
</dbReference>
<dbReference type="NCBIfam" id="NF000801">
    <property type="entry name" value="PRK00055.1-3"/>
    <property type="match status" value="1"/>
</dbReference>
<dbReference type="NCBIfam" id="NF000804">
    <property type="entry name" value="PRK00055.2-1"/>
    <property type="match status" value="1"/>
</dbReference>
<dbReference type="NCBIfam" id="TIGR02651">
    <property type="entry name" value="RNase_Z"/>
    <property type="match status" value="1"/>
</dbReference>
<dbReference type="PANTHER" id="PTHR46018">
    <property type="entry name" value="ZINC PHOSPHODIESTERASE ELAC PROTEIN 1"/>
    <property type="match status" value="1"/>
</dbReference>
<dbReference type="PANTHER" id="PTHR46018:SF2">
    <property type="entry name" value="ZINC PHOSPHODIESTERASE ELAC PROTEIN 1"/>
    <property type="match status" value="1"/>
</dbReference>
<dbReference type="Pfam" id="PF00753">
    <property type="entry name" value="Lactamase_B"/>
    <property type="match status" value="1"/>
</dbReference>
<dbReference type="SUPFAM" id="SSF56281">
    <property type="entry name" value="Metallo-hydrolase/oxidoreductase"/>
    <property type="match status" value="1"/>
</dbReference>
<evidence type="ECO:0000255" key="1">
    <source>
        <dbReference type="HAMAP-Rule" id="MF_01818"/>
    </source>
</evidence>
<sequence>MSYRGLTILGCSSQQPTRHRNHGAYLLRWNGEGLLFDPGEGTQRQFIYANIAPTVVSRIFISHFHGDHCLGLGSMLMRLNLDRVSHPIHCYYPASGKKYFDRLRYSTIYHETIKVIEHPIDREGIVEDFGNFRIESRQLDHLVDTLGWRITEPDTTKFIPEKIKAAGLKGPIMQELINKGRVKVNDTIVHLDDVSYTRKGDSIAVVADSLPCQAIVDLARNARILLCESTYLEEHSHLAKSHYHMTAKQAAEQAKRAEVQQLILTHFSARYNTTEEFVQEAGEIFPNVFAAEEFCSYEFPKNPS</sequence>
<feature type="chain" id="PRO_1000187943" description="Ribonuclease Z">
    <location>
        <begin position="1"/>
        <end position="304"/>
    </location>
</feature>
<feature type="active site" description="Proton acceptor" evidence="1">
    <location>
        <position position="67"/>
    </location>
</feature>
<feature type="binding site" evidence="1">
    <location>
        <position position="63"/>
    </location>
    <ligand>
        <name>Zn(2+)</name>
        <dbReference type="ChEBI" id="CHEBI:29105"/>
        <label>1</label>
        <note>catalytic</note>
    </ligand>
</feature>
<feature type="binding site" evidence="1">
    <location>
        <position position="65"/>
    </location>
    <ligand>
        <name>Zn(2+)</name>
        <dbReference type="ChEBI" id="CHEBI:29105"/>
        <label>1</label>
        <note>catalytic</note>
    </ligand>
</feature>
<feature type="binding site" evidence="1">
    <location>
        <position position="67"/>
    </location>
    <ligand>
        <name>Zn(2+)</name>
        <dbReference type="ChEBI" id="CHEBI:29105"/>
        <label>2</label>
        <note>catalytic</note>
    </ligand>
</feature>
<feature type="binding site" evidence="1">
    <location>
        <position position="68"/>
    </location>
    <ligand>
        <name>Zn(2+)</name>
        <dbReference type="ChEBI" id="CHEBI:29105"/>
        <label>2</label>
        <note>catalytic</note>
    </ligand>
</feature>
<feature type="binding site" evidence="1">
    <location>
        <position position="141"/>
    </location>
    <ligand>
        <name>Zn(2+)</name>
        <dbReference type="ChEBI" id="CHEBI:29105"/>
        <label>1</label>
        <note>catalytic</note>
    </ligand>
</feature>
<feature type="binding site" evidence="1">
    <location>
        <position position="208"/>
    </location>
    <ligand>
        <name>Zn(2+)</name>
        <dbReference type="ChEBI" id="CHEBI:29105"/>
        <label>1</label>
        <note>catalytic</note>
    </ligand>
</feature>
<feature type="binding site" evidence="1">
    <location>
        <position position="208"/>
    </location>
    <ligand>
        <name>Zn(2+)</name>
        <dbReference type="ChEBI" id="CHEBI:29105"/>
        <label>2</label>
        <note>catalytic</note>
    </ligand>
</feature>
<feature type="binding site" evidence="1">
    <location>
        <position position="266"/>
    </location>
    <ligand>
        <name>Zn(2+)</name>
        <dbReference type="ChEBI" id="CHEBI:29105"/>
        <label>2</label>
        <note>catalytic</note>
    </ligand>
</feature>
<protein>
    <recommendedName>
        <fullName evidence="1">Ribonuclease Z</fullName>
        <shortName evidence="1">RNase Z</shortName>
        <ecNumber evidence="1">3.1.26.11</ecNumber>
    </recommendedName>
    <alternativeName>
        <fullName evidence="1">tRNA 3 endonuclease</fullName>
    </alternativeName>
    <alternativeName>
        <fullName evidence="1">tRNase Z</fullName>
    </alternativeName>
</protein>
<accession>B0B7R5</accession>
<proteinExistence type="inferred from homology"/>